<reference key="1">
    <citation type="book" date="2000" name="Proceedings of Plant Biology '2000: The annual meeting of the American Society of Plant Physiologists">
        <title>Characterization and cloning of 10-hydroxygeraniol oxidoreductase.</title>
        <authorList>
            <person name="Teoh K.H."/>
            <person name="Gorman E.B."/>
            <person name="McKnight T.D."/>
        </authorList>
    </citation>
    <scope>NUCLEOTIDE SEQUENCE [MRNA]</scope>
    <scope>FUNCTION</scope>
    <scope>CATALYTIC ACTIVITY</scope>
    <scope>TISSUE SPECIFICITY</scope>
</reference>
<proteinExistence type="evidence at protein level"/>
<accession>Q6V4H0</accession>
<feature type="chain" id="PRO_0000418979" description="8-hydroxygeraniol dehydrogenase">
    <location>
        <begin position="1"/>
        <end position="360"/>
    </location>
</feature>
<feature type="binding site" evidence="1">
    <location>
        <position position="50"/>
    </location>
    <ligand>
        <name>Zn(2+)</name>
        <dbReference type="ChEBI" id="CHEBI:29105"/>
        <label>1</label>
        <note>catalytic</note>
    </ligand>
</feature>
<feature type="binding site" evidence="1">
    <location>
        <position position="72"/>
    </location>
    <ligand>
        <name>Zn(2+)</name>
        <dbReference type="ChEBI" id="CHEBI:29105"/>
        <label>1</label>
        <note>catalytic</note>
    </ligand>
</feature>
<feature type="binding site" evidence="1">
    <location>
        <position position="103"/>
    </location>
    <ligand>
        <name>Zn(2+)</name>
        <dbReference type="ChEBI" id="CHEBI:29105"/>
        <label>2</label>
    </ligand>
</feature>
<feature type="binding site" evidence="1">
    <location>
        <position position="106"/>
    </location>
    <ligand>
        <name>Zn(2+)</name>
        <dbReference type="ChEBI" id="CHEBI:29105"/>
        <label>2</label>
    </ligand>
</feature>
<feature type="binding site" evidence="1">
    <location>
        <position position="109"/>
    </location>
    <ligand>
        <name>Zn(2+)</name>
        <dbReference type="ChEBI" id="CHEBI:29105"/>
        <label>2</label>
    </ligand>
</feature>
<feature type="binding site" evidence="1">
    <location>
        <position position="117"/>
    </location>
    <ligand>
        <name>Zn(2+)</name>
        <dbReference type="ChEBI" id="CHEBI:29105"/>
        <label>2</label>
    </ligand>
</feature>
<feature type="binding site" evidence="1">
    <location>
        <position position="166"/>
    </location>
    <ligand>
        <name>Zn(2+)</name>
        <dbReference type="ChEBI" id="CHEBI:29105"/>
        <label>1</label>
        <note>catalytic</note>
    </ligand>
</feature>
<feature type="turn" evidence="4">
    <location>
        <begin position="5"/>
        <end position="7"/>
    </location>
</feature>
<feature type="strand" evidence="4">
    <location>
        <begin position="8"/>
        <end position="18"/>
    </location>
</feature>
<feature type="strand" evidence="4">
    <location>
        <begin position="25"/>
        <end position="32"/>
    </location>
</feature>
<feature type="strand" evidence="4">
    <location>
        <begin position="39"/>
        <end position="48"/>
    </location>
</feature>
<feature type="helix" evidence="4">
    <location>
        <begin position="51"/>
        <end position="57"/>
    </location>
</feature>
<feature type="turn" evidence="4">
    <location>
        <begin position="58"/>
        <end position="61"/>
    </location>
</feature>
<feature type="strand" evidence="4">
    <location>
        <begin position="66"/>
        <end position="68"/>
    </location>
</feature>
<feature type="strand" evidence="4">
    <location>
        <begin position="73"/>
        <end position="81"/>
    </location>
</feature>
<feature type="strand" evidence="4">
    <location>
        <begin position="93"/>
        <end position="96"/>
    </location>
</feature>
<feature type="strand" evidence="4">
    <location>
        <begin position="98"/>
        <end position="101"/>
    </location>
</feature>
<feature type="strand" evidence="4">
    <location>
        <begin position="104"/>
        <end position="106"/>
    </location>
</feature>
<feature type="helix" evidence="4">
    <location>
        <begin position="107"/>
        <end position="110"/>
    </location>
</feature>
<feature type="helix" evidence="4">
    <location>
        <begin position="114"/>
        <end position="116"/>
    </location>
</feature>
<feature type="strand" evidence="4">
    <location>
        <begin position="121"/>
        <end position="127"/>
    </location>
</feature>
<feature type="strand" evidence="4">
    <location>
        <begin position="137"/>
        <end position="145"/>
    </location>
</feature>
<feature type="helix" evidence="4">
    <location>
        <begin position="146"/>
        <end position="148"/>
    </location>
</feature>
<feature type="strand" evidence="4">
    <location>
        <begin position="149"/>
        <end position="151"/>
    </location>
</feature>
<feature type="helix" evidence="4">
    <location>
        <begin position="158"/>
        <end position="161"/>
    </location>
</feature>
<feature type="helix" evidence="4">
    <location>
        <begin position="162"/>
        <end position="165"/>
    </location>
</feature>
<feature type="helix" evidence="4">
    <location>
        <begin position="167"/>
        <end position="177"/>
    </location>
</feature>
<feature type="strand" evidence="4">
    <location>
        <begin position="186"/>
        <end position="190"/>
    </location>
</feature>
<feature type="helix" evidence="4">
    <location>
        <begin position="194"/>
        <end position="206"/>
    </location>
</feature>
<feature type="strand" evidence="4">
    <location>
        <begin position="209"/>
        <end position="215"/>
    </location>
</feature>
<feature type="helix" evidence="4">
    <location>
        <begin position="217"/>
        <end position="219"/>
    </location>
</feature>
<feature type="helix" evidence="4">
    <location>
        <begin position="220"/>
        <end position="224"/>
    </location>
</feature>
<feature type="turn" evidence="4">
    <location>
        <begin position="225"/>
        <end position="227"/>
    </location>
</feature>
<feature type="strand" evidence="4">
    <location>
        <begin position="230"/>
        <end position="236"/>
    </location>
</feature>
<feature type="helix" evidence="4">
    <location>
        <begin position="238"/>
        <end position="244"/>
    </location>
</feature>
<feature type="strand" evidence="4">
    <location>
        <begin position="248"/>
        <end position="253"/>
    </location>
</feature>
<feature type="helix" evidence="4">
    <location>
        <begin position="262"/>
        <end position="267"/>
    </location>
</feature>
<feature type="strand" evidence="4">
    <location>
        <begin position="268"/>
        <end position="276"/>
    </location>
</feature>
<feature type="helix" evidence="4">
    <location>
        <begin position="288"/>
        <end position="294"/>
    </location>
</feature>
<feature type="strand" evidence="4">
    <location>
        <begin position="297"/>
        <end position="300"/>
    </location>
</feature>
<feature type="helix" evidence="4">
    <location>
        <begin position="306"/>
        <end position="318"/>
    </location>
</feature>
<feature type="strand" evidence="4">
    <location>
        <begin position="325"/>
        <end position="328"/>
    </location>
</feature>
<feature type="helix" evidence="4">
    <location>
        <begin position="330"/>
        <end position="332"/>
    </location>
</feature>
<feature type="helix" evidence="4">
    <location>
        <begin position="333"/>
        <end position="341"/>
    </location>
</feature>
<feature type="strand" evidence="4">
    <location>
        <begin position="345"/>
        <end position="352"/>
    </location>
</feature>
<feature type="helix" evidence="4">
    <location>
        <begin position="353"/>
        <end position="356"/>
    </location>
</feature>
<keyword id="KW-0002">3D-structure</keyword>
<keyword id="KW-0479">Metal-binding</keyword>
<keyword id="KW-0521">NADP</keyword>
<keyword id="KW-0560">Oxidoreductase</keyword>
<keyword id="KW-0862">Zinc</keyword>
<protein>
    <recommendedName>
        <fullName>8-hydroxygeraniol dehydrogenase</fullName>
        <shortName>Cr10HGO</shortName>
        <ecNumber>1.1.1.324</ecNumber>
    </recommendedName>
</protein>
<sequence>MAKSPEVEHPVKAFGWAARDTSGHLSPFHFSRRATGEHDVQFKVLYCGICHSDLHMIKNEWGFTKYPIVPGHEIVGIVTEVGSKVEKFKVGDKVGVGCLVGSCRKCDMCTKDLENYCPGQILTYSATYTDGTTTYGGYSDLMVADEHFVIRWPENLPMDIGAPLLCAGITTYSPLRYFGLDKPGTHVGVVGLGGLGHVAVKFAKAFGAKVTVISTSESKKQEALEKLGADSFLVSRDPEQMKAAAASLDGIIDTVSAIHPIMPLLSILKSHGKLILVGAPEKPLELPSFPLIAGRKIIAGSAIGGLKETQEMIDFAAKHNVLPDVELVSMDYVNTAMERLLKADVKYRFVIDVANTLKSA</sequence>
<gene>
    <name type="primary">10HGO</name>
</gene>
<dbReference type="EC" id="1.1.1.324"/>
<dbReference type="EMBL" id="AY352047">
    <property type="protein sequence ID" value="AAQ55962.1"/>
    <property type="molecule type" value="mRNA"/>
</dbReference>
<dbReference type="PDB" id="6K3G">
    <property type="method" value="X-ray"/>
    <property type="resolution" value="2.41 A"/>
    <property type="chains" value="B=1-360"/>
</dbReference>
<dbReference type="PDB" id="6KJ5">
    <property type="method" value="X-ray"/>
    <property type="resolution" value="3.75 A"/>
    <property type="chains" value="A=4-359"/>
</dbReference>
<dbReference type="PDBsum" id="6K3G"/>
<dbReference type="PDBsum" id="6KJ5"/>
<dbReference type="SMR" id="Q6V4H0"/>
<dbReference type="BioCyc" id="MetaCyc:MONOMER-20519"/>
<dbReference type="GO" id="GO:0102311">
    <property type="term" value="F:8-hydroxygeraniol dehydrogenase activity"/>
    <property type="evidence" value="ECO:0007669"/>
    <property type="project" value="UniProtKB-EC"/>
</dbReference>
<dbReference type="GO" id="GO:0008270">
    <property type="term" value="F:zinc ion binding"/>
    <property type="evidence" value="ECO:0007669"/>
    <property type="project" value="InterPro"/>
</dbReference>
<dbReference type="GO" id="GO:0009820">
    <property type="term" value="P:alkaloid metabolic process"/>
    <property type="evidence" value="ECO:0007669"/>
    <property type="project" value="UniProtKB-ARBA"/>
</dbReference>
<dbReference type="CDD" id="cd05283">
    <property type="entry name" value="CAD1"/>
    <property type="match status" value="1"/>
</dbReference>
<dbReference type="FunFam" id="3.40.50.720:FF:000022">
    <property type="entry name" value="Cinnamyl alcohol dehydrogenase"/>
    <property type="match status" value="1"/>
</dbReference>
<dbReference type="FunFam" id="3.90.180.10:FF:000004">
    <property type="entry name" value="probable cinnamyl alcohol dehydrogenase"/>
    <property type="match status" value="1"/>
</dbReference>
<dbReference type="FunFam" id="3.90.180.10:FF:000100">
    <property type="entry name" value="Putative cinnamyl alcohol dehydrogenase 6"/>
    <property type="match status" value="1"/>
</dbReference>
<dbReference type="Gene3D" id="3.90.180.10">
    <property type="entry name" value="Medium-chain alcohol dehydrogenases, catalytic domain"/>
    <property type="match status" value="1"/>
</dbReference>
<dbReference type="Gene3D" id="3.40.50.720">
    <property type="entry name" value="NAD(P)-binding Rossmann-like Domain"/>
    <property type="match status" value="1"/>
</dbReference>
<dbReference type="InterPro" id="IPR013149">
    <property type="entry name" value="ADH-like_C"/>
</dbReference>
<dbReference type="InterPro" id="IPR013154">
    <property type="entry name" value="ADH-like_N"/>
</dbReference>
<dbReference type="InterPro" id="IPR002328">
    <property type="entry name" value="ADH_Zn_CS"/>
</dbReference>
<dbReference type="InterPro" id="IPR047109">
    <property type="entry name" value="CAD-like"/>
</dbReference>
<dbReference type="InterPro" id="IPR011032">
    <property type="entry name" value="GroES-like_sf"/>
</dbReference>
<dbReference type="InterPro" id="IPR036291">
    <property type="entry name" value="NAD(P)-bd_dom_sf"/>
</dbReference>
<dbReference type="InterPro" id="IPR020843">
    <property type="entry name" value="PKS_ER"/>
</dbReference>
<dbReference type="PANTHER" id="PTHR42683">
    <property type="entry name" value="ALDEHYDE REDUCTASE"/>
    <property type="match status" value="1"/>
</dbReference>
<dbReference type="Pfam" id="PF08240">
    <property type="entry name" value="ADH_N"/>
    <property type="match status" value="1"/>
</dbReference>
<dbReference type="Pfam" id="PF00107">
    <property type="entry name" value="ADH_zinc_N"/>
    <property type="match status" value="1"/>
</dbReference>
<dbReference type="SMART" id="SM00829">
    <property type="entry name" value="PKS_ER"/>
    <property type="match status" value="1"/>
</dbReference>
<dbReference type="SUPFAM" id="SSF50129">
    <property type="entry name" value="GroES-like"/>
    <property type="match status" value="1"/>
</dbReference>
<dbReference type="SUPFAM" id="SSF51735">
    <property type="entry name" value="NAD(P)-binding Rossmann-fold domains"/>
    <property type="match status" value="1"/>
</dbReference>
<dbReference type="PROSITE" id="PS00059">
    <property type="entry name" value="ADH_ZINC"/>
    <property type="match status" value="1"/>
</dbReference>
<comment type="function">
    <text evidence="2">Dehydrogenase involved in the biosynthesis of oxogeranial from hydroxygeraniol, a precursor of the terpenoid indole alkaloids such as vinblastine and vincristine.</text>
</comment>
<comment type="catalytic activity">
    <reaction evidence="2">
        <text>(6E)-8-hydroxygeraniol + 2 NADP(+) = (6E)-8-oxogeranial + 2 NADPH + 2 H(+)</text>
        <dbReference type="Rhea" id="RHEA:32659"/>
        <dbReference type="ChEBI" id="CHEBI:15378"/>
        <dbReference type="ChEBI" id="CHEBI:57783"/>
        <dbReference type="ChEBI" id="CHEBI:58349"/>
        <dbReference type="ChEBI" id="CHEBI:64235"/>
        <dbReference type="ChEBI" id="CHEBI:64239"/>
        <dbReference type="EC" id="1.1.1.324"/>
    </reaction>
</comment>
<comment type="cofactor">
    <cofactor evidence="1">
        <name>Zn(2+)</name>
        <dbReference type="ChEBI" id="CHEBI:29105"/>
    </cofactor>
</comment>
<comment type="tissue specificity">
    <text evidence="2">Present in seedlings and vascular tissues (at protein level). Restricted to the epidermis.</text>
</comment>
<comment type="miscellaneous">
    <text>The recommended numbering of geraniol gives (6E)-8-hydroxygeraniol as the substrate rather than 10-hydroxygeraniol and (6E)-8-oxogeranial as the product rather than 10-oxogeranial as used in most publications.</text>
</comment>
<comment type="similarity">
    <text evidence="3">Belongs to the zinc-containing alcohol dehydrogenase family.</text>
</comment>
<organism>
    <name type="scientific">Catharanthus roseus</name>
    <name type="common">Madagascar periwinkle</name>
    <name type="synonym">Vinca rosea</name>
    <dbReference type="NCBI Taxonomy" id="4058"/>
    <lineage>
        <taxon>Eukaryota</taxon>
        <taxon>Viridiplantae</taxon>
        <taxon>Streptophyta</taxon>
        <taxon>Embryophyta</taxon>
        <taxon>Tracheophyta</taxon>
        <taxon>Spermatophyta</taxon>
        <taxon>Magnoliopsida</taxon>
        <taxon>eudicotyledons</taxon>
        <taxon>Gunneridae</taxon>
        <taxon>Pentapetalae</taxon>
        <taxon>asterids</taxon>
        <taxon>lamiids</taxon>
        <taxon>Gentianales</taxon>
        <taxon>Apocynaceae</taxon>
        <taxon>Rauvolfioideae</taxon>
        <taxon>Vinceae</taxon>
        <taxon>Catharanthinae</taxon>
        <taxon>Catharanthus</taxon>
    </lineage>
</organism>
<evidence type="ECO:0000250" key="1"/>
<evidence type="ECO:0000269" key="2">
    <source ref="1"/>
</evidence>
<evidence type="ECO:0000305" key="3"/>
<evidence type="ECO:0007829" key="4">
    <source>
        <dbReference type="PDB" id="6K3G"/>
    </source>
</evidence>
<name>10HGO_CATRO</name>